<organism>
    <name type="scientific">Myxococcus xanthus (strain DK1622)</name>
    <dbReference type="NCBI Taxonomy" id="246197"/>
    <lineage>
        <taxon>Bacteria</taxon>
        <taxon>Pseudomonadati</taxon>
        <taxon>Myxococcota</taxon>
        <taxon>Myxococcia</taxon>
        <taxon>Myxococcales</taxon>
        <taxon>Cystobacterineae</taxon>
        <taxon>Myxococcaceae</taxon>
        <taxon>Myxococcus</taxon>
    </lineage>
</organism>
<dbReference type="EC" id="4.1.1.65" evidence="1"/>
<dbReference type="EMBL" id="CP000113">
    <property type="protein sequence ID" value="ABF89096.1"/>
    <property type="molecule type" value="Genomic_DNA"/>
</dbReference>
<dbReference type="RefSeq" id="WP_011553740.1">
    <property type="nucleotide sequence ID" value="NC_008095.1"/>
</dbReference>
<dbReference type="SMR" id="Q1D614"/>
<dbReference type="STRING" id="246197.MXAN_3724"/>
<dbReference type="EnsemblBacteria" id="ABF89096">
    <property type="protein sequence ID" value="ABF89096"/>
    <property type="gene ID" value="MXAN_3724"/>
</dbReference>
<dbReference type="GeneID" id="41361057"/>
<dbReference type="KEGG" id="mxa:MXAN_3724"/>
<dbReference type="eggNOG" id="COG0688">
    <property type="taxonomic scope" value="Bacteria"/>
</dbReference>
<dbReference type="HOGENOM" id="CLU_029061_4_0_7"/>
<dbReference type="OrthoDB" id="9802030at2"/>
<dbReference type="UniPathway" id="UPA00558">
    <property type="reaction ID" value="UER00616"/>
</dbReference>
<dbReference type="Proteomes" id="UP000002402">
    <property type="component" value="Chromosome"/>
</dbReference>
<dbReference type="GO" id="GO:0005886">
    <property type="term" value="C:plasma membrane"/>
    <property type="evidence" value="ECO:0007669"/>
    <property type="project" value="UniProtKB-SubCell"/>
</dbReference>
<dbReference type="GO" id="GO:0004609">
    <property type="term" value="F:phosphatidylserine decarboxylase activity"/>
    <property type="evidence" value="ECO:0007669"/>
    <property type="project" value="UniProtKB-UniRule"/>
</dbReference>
<dbReference type="GO" id="GO:0006646">
    <property type="term" value="P:phosphatidylethanolamine biosynthetic process"/>
    <property type="evidence" value="ECO:0007669"/>
    <property type="project" value="UniProtKB-UniRule"/>
</dbReference>
<dbReference type="HAMAP" id="MF_00662">
    <property type="entry name" value="PS_decarb_PSD_B_type1"/>
    <property type="match status" value="1"/>
</dbReference>
<dbReference type="InterPro" id="IPR003817">
    <property type="entry name" value="PS_Dcarbxylase"/>
</dbReference>
<dbReference type="InterPro" id="IPR033177">
    <property type="entry name" value="PSD-B"/>
</dbReference>
<dbReference type="InterPro" id="IPR033178">
    <property type="entry name" value="PSD_type1_pro"/>
</dbReference>
<dbReference type="NCBIfam" id="TIGR00163">
    <property type="entry name" value="PS_decarb"/>
    <property type="match status" value="1"/>
</dbReference>
<dbReference type="PANTHER" id="PTHR10067">
    <property type="entry name" value="PHOSPHATIDYLSERINE DECARBOXYLASE"/>
    <property type="match status" value="1"/>
</dbReference>
<dbReference type="PANTHER" id="PTHR10067:SF6">
    <property type="entry name" value="PHOSPHATIDYLSERINE DECARBOXYLASE PROENZYME, MITOCHONDRIAL"/>
    <property type="match status" value="1"/>
</dbReference>
<dbReference type="Pfam" id="PF02666">
    <property type="entry name" value="PS_Dcarbxylase"/>
    <property type="match status" value="1"/>
</dbReference>
<keyword id="KW-1003">Cell membrane</keyword>
<keyword id="KW-0210">Decarboxylase</keyword>
<keyword id="KW-0444">Lipid biosynthesis</keyword>
<keyword id="KW-0443">Lipid metabolism</keyword>
<keyword id="KW-0456">Lyase</keyword>
<keyword id="KW-0472">Membrane</keyword>
<keyword id="KW-0594">Phospholipid biosynthesis</keyword>
<keyword id="KW-1208">Phospholipid metabolism</keyword>
<keyword id="KW-0670">Pyruvate</keyword>
<keyword id="KW-1185">Reference proteome</keyword>
<keyword id="KW-0865">Zymogen</keyword>
<evidence type="ECO:0000255" key="1">
    <source>
        <dbReference type="HAMAP-Rule" id="MF_00662"/>
    </source>
</evidence>
<protein>
    <recommendedName>
        <fullName evidence="1">Phosphatidylserine decarboxylase proenzyme</fullName>
        <ecNumber evidence="1">4.1.1.65</ecNumber>
    </recommendedName>
    <component>
        <recommendedName>
            <fullName evidence="1">Phosphatidylserine decarboxylase alpha chain</fullName>
        </recommendedName>
    </component>
    <component>
        <recommendedName>
            <fullName evidence="1">Phosphatidylserine decarboxylase beta chain</fullName>
        </recommendedName>
    </component>
</protein>
<reference key="1">
    <citation type="journal article" date="2006" name="Proc. Natl. Acad. Sci. U.S.A.">
        <title>Evolution of sensory complexity recorded in a myxobacterial genome.</title>
        <authorList>
            <person name="Goldman B.S."/>
            <person name="Nierman W.C."/>
            <person name="Kaiser D."/>
            <person name="Slater S.C."/>
            <person name="Durkin A.S."/>
            <person name="Eisen J.A."/>
            <person name="Ronning C.M."/>
            <person name="Barbazuk W.B."/>
            <person name="Blanchard M."/>
            <person name="Field C."/>
            <person name="Halling C."/>
            <person name="Hinkle G."/>
            <person name="Iartchuk O."/>
            <person name="Kim H.S."/>
            <person name="Mackenzie C."/>
            <person name="Madupu R."/>
            <person name="Miller N."/>
            <person name="Shvartsbeyn A."/>
            <person name="Sullivan S.A."/>
            <person name="Vaudin M."/>
            <person name="Wiegand R."/>
            <person name="Kaplan H.B."/>
        </authorList>
    </citation>
    <scope>NUCLEOTIDE SEQUENCE [LARGE SCALE GENOMIC DNA]</scope>
    <source>
        <strain>DK1622</strain>
    </source>
</reference>
<proteinExistence type="inferred from homology"/>
<gene>
    <name evidence="1" type="primary">psd</name>
    <name type="ordered locus">MXAN_3724</name>
</gene>
<comment type="function">
    <text evidence="1">Catalyzes the formation of phosphatidylethanolamine (PtdEtn) from phosphatidylserine (PtdSer).</text>
</comment>
<comment type="catalytic activity">
    <reaction evidence="1">
        <text>a 1,2-diacyl-sn-glycero-3-phospho-L-serine + H(+) = a 1,2-diacyl-sn-glycero-3-phosphoethanolamine + CO2</text>
        <dbReference type="Rhea" id="RHEA:20828"/>
        <dbReference type="ChEBI" id="CHEBI:15378"/>
        <dbReference type="ChEBI" id="CHEBI:16526"/>
        <dbReference type="ChEBI" id="CHEBI:57262"/>
        <dbReference type="ChEBI" id="CHEBI:64612"/>
        <dbReference type="EC" id="4.1.1.65"/>
    </reaction>
</comment>
<comment type="cofactor">
    <cofactor evidence="1">
        <name>pyruvate</name>
        <dbReference type="ChEBI" id="CHEBI:15361"/>
    </cofactor>
    <text evidence="1">Binds 1 pyruvoyl group covalently per subunit.</text>
</comment>
<comment type="pathway">
    <text evidence="1">Phospholipid metabolism; phosphatidylethanolamine biosynthesis; phosphatidylethanolamine from CDP-diacylglycerol: step 2/2.</text>
</comment>
<comment type="subunit">
    <text evidence="1">Heterodimer of a large membrane-associated beta subunit and a small pyruvoyl-containing alpha subunit.</text>
</comment>
<comment type="subcellular location">
    <subcellularLocation>
        <location evidence="1">Cell membrane</location>
        <topology evidence="1">Peripheral membrane protein</topology>
    </subcellularLocation>
</comment>
<comment type="PTM">
    <text evidence="1">Is synthesized initially as an inactive proenzyme. Formation of the active enzyme involves a self-maturation process in which the active site pyruvoyl group is generated from an internal serine residue via an autocatalytic post-translational modification. Two non-identical subunits are generated from the proenzyme in this reaction, and the pyruvate is formed at the N-terminus of the alpha chain, which is derived from the carboxyl end of the proenzyme. The autoendoproteolytic cleavage occurs by a canonical serine protease mechanism, in which the side chain hydroxyl group of the serine supplies its oxygen atom to form the C-terminus of the beta chain, while the remainder of the serine residue undergoes an oxidative deamination to produce ammonia and the pyruvoyl prosthetic group on the alpha chain. During this reaction, the Ser that is part of the protease active site of the proenzyme becomes the pyruvoyl prosthetic group, which constitutes an essential element of the active site of the mature decarboxylase.</text>
</comment>
<comment type="similarity">
    <text evidence="1">Belongs to the phosphatidylserine decarboxylase family. PSD-B subfamily. Prokaryotic type I sub-subfamily.</text>
</comment>
<name>PSD_MYXXD</name>
<accession>Q1D614</accession>
<sequence>MNDQTFMKLMQVLPKSALSTVVGMATRLPVPAPVHQAAMRAFAKAYNVDMEEAEHSFEHYPTFAQFFTRGLKPGLRPVDAGEKVVVSPVDGRVSQVGYSDYGRCLQAKGIEYTVDELLGDSEAAKPFYGGAWTTIYLSPRDYHRIHAPLGGTITGYAYIPGEFWPVNPASVKNKQSLFCVNERLVTYLDTVAGKCAVVKVGATCVSRIKAAYDEVTTHTGQPGKVHRYGSAMPVEKGGELGRFEMGSTVILLFEPKRVTWDDSLQEEAVVRLGKRIGVIT</sequence>
<feature type="chain" id="PRO_0000262125" description="Phosphatidylserine decarboxylase beta chain" evidence="1">
    <location>
        <begin position="1"/>
        <end position="246"/>
    </location>
</feature>
<feature type="chain" id="PRO_0000262126" description="Phosphatidylserine decarboxylase alpha chain" evidence="1">
    <location>
        <begin position="247"/>
        <end position="280"/>
    </location>
</feature>
<feature type="active site" description="Charge relay system; for autoendoproteolytic cleavage activity" evidence="1">
    <location>
        <position position="90"/>
    </location>
</feature>
<feature type="active site" description="Charge relay system; for autoendoproteolytic cleavage activity" evidence="1">
    <location>
        <position position="146"/>
    </location>
</feature>
<feature type="active site" description="Charge relay system; for autoendoproteolytic cleavage activity" evidence="1">
    <location>
        <position position="247"/>
    </location>
</feature>
<feature type="active site" description="Schiff-base intermediate with substrate; via pyruvic acid; for decarboxylase activity" evidence="1">
    <location>
        <position position="247"/>
    </location>
</feature>
<feature type="site" description="Cleavage (non-hydrolytic); by autocatalysis" evidence="1">
    <location>
        <begin position="246"/>
        <end position="247"/>
    </location>
</feature>
<feature type="modified residue" description="Pyruvic acid (Ser); by autocatalysis" evidence="1">
    <location>
        <position position="247"/>
    </location>
</feature>